<evidence type="ECO:0000255" key="1">
    <source>
        <dbReference type="HAMAP-Rule" id="MF_00185"/>
    </source>
</evidence>
<proteinExistence type="inferred from homology"/>
<dbReference type="EC" id="2.5.1.75" evidence="1"/>
<dbReference type="EMBL" id="CP000627">
    <property type="protein sequence ID" value="ABQ20180.1"/>
    <property type="molecule type" value="Genomic_DNA"/>
</dbReference>
<dbReference type="EMBL" id="CP001235">
    <property type="protein sequence ID" value="ACP08412.1"/>
    <property type="molecule type" value="Genomic_DNA"/>
</dbReference>
<dbReference type="RefSeq" id="WP_000192300.1">
    <property type="nucleotide sequence ID" value="NZ_JAACZH010000038.1"/>
</dbReference>
<dbReference type="SMR" id="A5F3L6"/>
<dbReference type="KEGG" id="vco:VC0395_A2757"/>
<dbReference type="KEGG" id="vcr:VC395_0389"/>
<dbReference type="PATRIC" id="fig|345073.21.peg.378"/>
<dbReference type="eggNOG" id="COG0324">
    <property type="taxonomic scope" value="Bacteria"/>
</dbReference>
<dbReference type="HOGENOM" id="CLU_032616_0_0_6"/>
<dbReference type="OrthoDB" id="9776390at2"/>
<dbReference type="Proteomes" id="UP000000249">
    <property type="component" value="Chromosome 2"/>
</dbReference>
<dbReference type="GO" id="GO:0005524">
    <property type="term" value="F:ATP binding"/>
    <property type="evidence" value="ECO:0007669"/>
    <property type="project" value="UniProtKB-UniRule"/>
</dbReference>
<dbReference type="GO" id="GO:0052381">
    <property type="term" value="F:tRNA dimethylallyltransferase activity"/>
    <property type="evidence" value="ECO:0007669"/>
    <property type="project" value="UniProtKB-UniRule"/>
</dbReference>
<dbReference type="GO" id="GO:0006400">
    <property type="term" value="P:tRNA modification"/>
    <property type="evidence" value="ECO:0007669"/>
    <property type="project" value="TreeGrafter"/>
</dbReference>
<dbReference type="FunFam" id="1.10.20.140:FF:000001">
    <property type="entry name" value="tRNA dimethylallyltransferase"/>
    <property type="match status" value="1"/>
</dbReference>
<dbReference type="Gene3D" id="1.10.20.140">
    <property type="match status" value="1"/>
</dbReference>
<dbReference type="Gene3D" id="3.40.50.300">
    <property type="entry name" value="P-loop containing nucleotide triphosphate hydrolases"/>
    <property type="match status" value="1"/>
</dbReference>
<dbReference type="HAMAP" id="MF_00185">
    <property type="entry name" value="IPP_trans"/>
    <property type="match status" value="1"/>
</dbReference>
<dbReference type="InterPro" id="IPR039657">
    <property type="entry name" value="Dimethylallyltransferase"/>
</dbReference>
<dbReference type="InterPro" id="IPR018022">
    <property type="entry name" value="IPT"/>
</dbReference>
<dbReference type="InterPro" id="IPR027417">
    <property type="entry name" value="P-loop_NTPase"/>
</dbReference>
<dbReference type="NCBIfam" id="TIGR00174">
    <property type="entry name" value="miaA"/>
    <property type="match status" value="1"/>
</dbReference>
<dbReference type="PANTHER" id="PTHR11088">
    <property type="entry name" value="TRNA DIMETHYLALLYLTRANSFERASE"/>
    <property type="match status" value="1"/>
</dbReference>
<dbReference type="PANTHER" id="PTHR11088:SF60">
    <property type="entry name" value="TRNA DIMETHYLALLYLTRANSFERASE"/>
    <property type="match status" value="1"/>
</dbReference>
<dbReference type="Pfam" id="PF01715">
    <property type="entry name" value="IPPT"/>
    <property type="match status" value="1"/>
</dbReference>
<dbReference type="SUPFAM" id="SSF52540">
    <property type="entry name" value="P-loop containing nucleoside triphosphate hydrolases"/>
    <property type="match status" value="1"/>
</dbReference>
<keyword id="KW-0067">ATP-binding</keyword>
<keyword id="KW-0460">Magnesium</keyword>
<keyword id="KW-0547">Nucleotide-binding</keyword>
<keyword id="KW-0808">Transferase</keyword>
<keyword id="KW-0819">tRNA processing</keyword>
<sequence length="315" mass="35516">MTQKLPLALFLMGPTASGKTDLAIRLRQKYPVEIISVDSALIYRGMDIGTAKPDAQELALAPHRLIDILDPSEAYSAADFRRDALKEMADIVAQGKIPLLVGGTMLYFKALLEGLSPLPAADPVIRQQIELEAEKLGWQALHDQLQQIDPVSAQRIHPNDPQRLSRALEVYRISGKTLTELTQTKGEAIPYRVLQFAIAPKERAELHRRIELRFEKMVESGFEEEVKALYARDDLHPDLPSIRCVGYRQMWDYLDGHGTLDEAIYRGICATRQLAKRQITWLRSWDDLTWLDSENVDQAVETLSNAIASNEISCV</sequence>
<reference key="1">
    <citation type="submission" date="2007-03" db="EMBL/GenBank/DDBJ databases">
        <authorList>
            <person name="Heidelberg J."/>
        </authorList>
    </citation>
    <scope>NUCLEOTIDE SEQUENCE [LARGE SCALE GENOMIC DNA]</scope>
    <source>
        <strain>ATCC 39541 / Classical Ogawa 395 / O395</strain>
    </source>
</reference>
<reference key="2">
    <citation type="journal article" date="2008" name="PLoS ONE">
        <title>A recalibrated molecular clock and independent origins for the cholera pandemic clones.</title>
        <authorList>
            <person name="Feng L."/>
            <person name="Reeves P.R."/>
            <person name="Lan R."/>
            <person name="Ren Y."/>
            <person name="Gao C."/>
            <person name="Zhou Z."/>
            <person name="Ren Y."/>
            <person name="Cheng J."/>
            <person name="Wang W."/>
            <person name="Wang J."/>
            <person name="Qian W."/>
            <person name="Li D."/>
            <person name="Wang L."/>
        </authorList>
    </citation>
    <scope>NUCLEOTIDE SEQUENCE [LARGE SCALE GENOMIC DNA]</scope>
    <source>
        <strain>ATCC 39541 / Classical Ogawa 395 / O395</strain>
    </source>
</reference>
<name>MIAA_VIBC3</name>
<organism>
    <name type="scientific">Vibrio cholerae serotype O1 (strain ATCC 39541 / Classical Ogawa 395 / O395)</name>
    <dbReference type="NCBI Taxonomy" id="345073"/>
    <lineage>
        <taxon>Bacteria</taxon>
        <taxon>Pseudomonadati</taxon>
        <taxon>Pseudomonadota</taxon>
        <taxon>Gammaproteobacteria</taxon>
        <taxon>Vibrionales</taxon>
        <taxon>Vibrionaceae</taxon>
        <taxon>Vibrio</taxon>
    </lineage>
</organism>
<comment type="function">
    <text evidence="1">Catalyzes the transfer of a dimethylallyl group onto the adenine at position 37 in tRNAs that read codons beginning with uridine, leading to the formation of N6-(dimethylallyl)adenosine (i(6)A).</text>
</comment>
<comment type="catalytic activity">
    <reaction evidence="1">
        <text>adenosine(37) in tRNA + dimethylallyl diphosphate = N(6)-dimethylallyladenosine(37) in tRNA + diphosphate</text>
        <dbReference type="Rhea" id="RHEA:26482"/>
        <dbReference type="Rhea" id="RHEA-COMP:10162"/>
        <dbReference type="Rhea" id="RHEA-COMP:10375"/>
        <dbReference type="ChEBI" id="CHEBI:33019"/>
        <dbReference type="ChEBI" id="CHEBI:57623"/>
        <dbReference type="ChEBI" id="CHEBI:74411"/>
        <dbReference type="ChEBI" id="CHEBI:74415"/>
        <dbReference type="EC" id="2.5.1.75"/>
    </reaction>
</comment>
<comment type="cofactor">
    <cofactor evidence="1">
        <name>Mg(2+)</name>
        <dbReference type="ChEBI" id="CHEBI:18420"/>
    </cofactor>
</comment>
<comment type="subunit">
    <text evidence="1">Monomer.</text>
</comment>
<comment type="similarity">
    <text evidence="1">Belongs to the IPP transferase family.</text>
</comment>
<protein>
    <recommendedName>
        <fullName evidence="1">tRNA dimethylallyltransferase</fullName>
        <ecNumber evidence="1">2.5.1.75</ecNumber>
    </recommendedName>
    <alternativeName>
        <fullName evidence="1">Dimethylallyl diphosphate:tRNA dimethylallyltransferase</fullName>
        <shortName evidence="1">DMAPP:tRNA dimethylallyltransferase</shortName>
        <shortName evidence="1">DMATase</shortName>
    </alternativeName>
    <alternativeName>
        <fullName evidence="1">Isopentenyl-diphosphate:tRNA isopentenyltransferase</fullName>
        <shortName evidence="1">IPP transferase</shortName>
        <shortName evidence="1">IPPT</shortName>
        <shortName evidence="1">IPTase</shortName>
    </alternativeName>
</protein>
<feature type="chain" id="PRO_1000071683" description="tRNA dimethylallyltransferase">
    <location>
        <begin position="1"/>
        <end position="315"/>
    </location>
</feature>
<feature type="region of interest" description="Interaction with substrate tRNA" evidence="1">
    <location>
        <begin position="38"/>
        <end position="41"/>
    </location>
</feature>
<feature type="region of interest" description="Interaction with substrate tRNA" evidence="1">
    <location>
        <begin position="162"/>
        <end position="166"/>
    </location>
</feature>
<feature type="region of interest" description="Interaction with substrate tRNA" evidence="1">
    <location>
        <begin position="243"/>
        <end position="248"/>
    </location>
</feature>
<feature type="region of interest" description="Interaction with substrate tRNA" evidence="1">
    <location>
        <begin position="276"/>
        <end position="283"/>
    </location>
</feature>
<feature type="binding site" evidence="1">
    <location>
        <begin position="13"/>
        <end position="20"/>
    </location>
    <ligand>
        <name>ATP</name>
        <dbReference type="ChEBI" id="CHEBI:30616"/>
    </ligand>
</feature>
<feature type="binding site" evidence="1">
    <location>
        <begin position="15"/>
        <end position="20"/>
    </location>
    <ligand>
        <name>substrate</name>
    </ligand>
</feature>
<feature type="site" description="Interaction with substrate tRNA" evidence="1">
    <location>
        <position position="104"/>
    </location>
</feature>
<feature type="site" description="Interaction with substrate tRNA" evidence="1">
    <location>
        <position position="126"/>
    </location>
</feature>
<accession>A5F3L6</accession>
<accession>C3M404</accession>
<gene>
    <name evidence="1" type="primary">miaA</name>
    <name type="ordered locus">VC0395_A2757</name>
    <name type="ordered locus">VC395_0389</name>
</gene>